<accession>Q6R7I0</accession>
<feature type="chain" id="PRO_0000385072" description="Uncharacterized protein ORF44">
    <location>
        <begin position="1"/>
        <end position="308"/>
    </location>
</feature>
<feature type="coiled-coil region" evidence="1">
    <location>
        <begin position="212"/>
        <end position="242"/>
    </location>
</feature>
<evidence type="ECO:0000255" key="1"/>
<keyword id="KW-0175">Coiled coil</keyword>
<keyword id="KW-1185">Reference proteome</keyword>
<dbReference type="EMBL" id="AY509253">
    <property type="protein sequence ID" value="AAS00934.1"/>
    <property type="molecule type" value="Genomic_DNA"/>
</dbReference>
<dbReference type="RefSeq" id="YP_024588.1">
    <property type="nucleotide sequence ID" value="NC_005881.2"/>
</dbReference>
<dbReference type="KEGG" id="vg:2948188"/>
<dbReference type="Proteomes" id="UP000007021">
    <property type="component" value="Segment"/>
</dbReference>
<dbReference type="Gene3D" id="3.40.50.300">
    <property type="entry name" value="P-loop containing nucleotide triphosphate hydrolases"/>
    <property type="match status" value="1"/>
</dbReference>
<dbReference type="InterPro" id="IPR027417">
    <property type="entry name" value="P-loop_NTPase"/>
</dbReference>
<dbReference type="SUPFAM" id="SSF52540">
    <property type="entry name" value="P-loop containing nucleoside triphosphate hydrolases"/>
    <property type="match status" value="1"/>
</dbReference>
<name>Y044_OSHVF</name>
<gene>
    <name type="ORF">ORF44</name>
</gene>
<protein>
    <recommendedName>
        <fullName>Uncharacterized protein ORF44</fullName>
    </recommendedName>
</protein>
<sequence>MPRNIHYVKSKTTAVFEGIPGVGKSTITTEAARELKRRLGDEYIIFLNFAPLEGDAVETVLATNTKGSKRGMDFIRMVYDPEIKAENLHFATTVTGQLIAKELKFNSEYVVDKSKGKKHLINIIERNSASAAGIFIAGNYYNMRLASDLPGDVRNRYDGDWKNVVHTQNNMAAAAKNVFLTADESERFIIVFLETDYKKAFERVVKRGRNWEADKMTIDYMRELDNLQRQYDGLVDEDKALHWKRLYPVEQVKTIHFDVDKYYTGKEETKERDIINMVEDCNEVLFRHLIVPERKSLWKRFMDFVLPK</sequence>
<organism>
    <name type="scientific">Ostreid herpesvirus 1 (isolate France)</name>
    <name type="common">OsHV-1</name>
    <name type="synonym">Pacific oyster herpesvirus</name>
    <dbReference type="NCBI Taxonomy" id="654903"/>
    <lineage>
        <taxon>Viruses</taxon>
        <taxon>Duplodnaviria</taxon>
        <taxon>Heunggongvirae</taxon>
        <taxon>Peploviricota</taxon>
        <taxon>Herviviricetes</taxon>
        <taxon>Herpesvirales</taxon>
        <taxon>Malacoherpesviridae</taxon>
        <taxon>Ostreavirus</taxon>
        <taxon>Ostreavirus ostreidmalaco1</taxon>
        <taxon>Ostreid herpesvirus 1</taxon>
    </lineage>
</organism>
<organismHost>
    <name type="scientific">Magallana gigas</name>
    <name type="common">Pacific oyster</name>
    <name type="synonym">Crassostrea gigas</name>
    <dbReference type="NCBI Taxonomy" id="29159"/>
</organismHost>
<organismHost>
    <name type="scientific">Pecten maximus</name>
    <name type="common">King scallop</name>
    <name type="synonym">Pilgrim's clam</name>
    <dbReference type="NCBI Taxonomy" id="6579"/>
</organismHost>
<proteinExistence type="predicted"/>
<reference key="1">
    <citation type="journal article" date="2005" name="J. Gen. Virol.">
        <title>A novel class of herpesvirus with bivalve hosts.</title>
        <authorList>
            <person name="Davison A.J."/>
            <person name="Trus B.L."/>
            <person name="Cheng N."/>
            <person name="Steven A.C."/>
            <person name="Watson M.S."/>
            <person name="Cunningham C."/>
            <person name="Le Deuff R.M."/>
            <person name="Renault T."/>
        </authorList>
    </citation>
    <scope>NUCLEOTIDE SEQUENCE [LARGE SCALE GENOMIC DNA]</scope>
</reference>